<reference key="1">
    <citation type="journal article" date="2000" name="Proc. Natl. Acad. Sci. U.S.A.">
        <title>Post-symbiotic plasmid acquisition and evolution of the repA1-replicon in Buchnera aphidicola.</title>
        <authorList>
            <person name="Van Ham R.C.H.J."/>
            <person name="Gonzalez-Candelas F."/>
            <person name="Silva F.J."/>
            <person name="Sabater B."/>
            <person name="Moya A."/>
            <person name="Latorre A."/>
        </authorList>
    </citation>
    <scope>NUCLEOTIDE SEQUENCE [GENOMIC DNA]</scope>
</reference>
<proteinExistence type="inferred from homology"/>
<gene>
    <name evidence="1" type="primary">groES</name>
    <name evidence="1" type="synonym">groS</name>
</gene>
<evidence type="ECO:0000255" key="1">
    <source>
        <dbReference type="HAMAP-Rule" id="MF_00580"/>
    </source>
</evidence>
<keyword id="KW-0143">Chaperone</keyword>
<keyword id="KW-0963">Cytoplasm</keyword>
<accession>Q9F4E4</accession>
<protein>
    <recommendedName>
        <fullName evidence="1">Co-chaperonin GroES</fullName>
    </recommendedName>
    <alternativeName>
        <fullName evidence="1">10 kDa chaperonin</fullName>
    </alternativeName>
    <alternativeName>
        <fullName evidence="1">Chaperonin-10</fullName>
        <shortName evidence="1">Cpn10</shortName>
    </alternativeName>
</protein>
<comment type="function">
    <text evidence="1">Together with the chaperonin GroEL, plays an essential role in assisting protein folding. The GroEL-GroES system forms a nano-cage that allows encapsulation of the non-native substrate proteins and provides a physical environment optimized to promote and accelerate protein folding. GroES binds to the apical surface of the GroEL ring, thereby capping the opening of the GroEL channel.</text>
</comment>
<comment type="subunit">
    <text evidence="1">Heptamer of 7 subunits arranged in a ring. Interacts with the chaperonin GroEL.</text>
</comment>
<comment type="subcellular location">
    <subcellularLocation>
        <location evidence="1">Cytoplasm</location>
    </subcellularLocation>
</comment>
<comment type="similarity">
    <text evidence="1">Belongs to the GroES chaperonin family.</text>
</comment>
<dbReference type="EMBL" id="AJ401310">
    <property type="protein sequence ID" value="CAC10483.1"/>
    <property type="molecule type" value="Genomic_DNA"/>
</dbReference>
<dbReference type="SMR" id="Q9F4E4"/>
<dbReference type="GO" id="GO:0005737">
    <property type="term" value="C:cytoplasm"/>
    <property type="evidence" value="ECO:0007669"/>
    <property type="project" value="UniProtKB-SubCell"/>
</dbReference>
<dbReference type="GO" id="GO:0005524">
    <property type="term" value="F:ATP binding"/>
    <property type="evidence" value="ECO:0007669"/>
    <property type="project" value="InterPro"/>
</dbReference>
<dbReference type="GO" id="GO:0046872">
    <property type="term" value="F:metal ion binding"/>
    <property type="evidence" value="ECO:0007669"/>
    <property type="project" value="TreeGrafter"/>
</dbReference>
<dbReference type="GO" id="GO:0044183">
    <property type="term" value="F:protein folding chaperone"/>
    <property type="evidence" value="ECO:0007669"/>
    <property type="project" value="InterPro"/>
</dbReference>
<dbReference type="GO" id="GO:0051087">
    <property type="term" value="F:protein-folding chaperone binding"/>
    <property type="evidence" value="ECO:0007669"/>
    <property type="project" value="TreeGrafter"/>
</dbReference>
<dbReference type="GO" id="GO:0051082">
    <property type="term" value="F:unfolded protein binding"/>
    <property type="evidence" value="ECO:0007669"/>
    <property type="project" value="TreeGrafter"/>
</dbReference>
<dbReference type="GO" id="GO:0051085">
    <property type="term" value="P:chaperone cofactor-dependent protein refolding"/>
    <property type="evidence" value="ECO:0007669"/>
    <property type="project" value="TreeGrafter"/>
</dbReference>
<dbReference type="CDD" id="cd00320">
    <property type="entry name" value="cpn10"/>
    <property type="match status" value="1"/>
</dbReference>
<dbReference type="FunFam" id="2.30.33.40:FF:000001">
    <property type="entry name" value="10 kDa chaperonin"/>
    <property type="match status" value="1"/>
</dbReference>
<dbReference type="Gene3D" id="2.30.33.40">
    <property type="entry name" value="GroES chaperonin"/>
    <property type="match status" value="1"/>
</dbReference>
<dbReference type="HAMAP" id="MF_00580">
    <property type="entry name" value="CH10"/>
    <property type="match status" value="1"/>
</dbReference>
<dbReference type="InterPro" id="IPR020818">
    <property type="entry name" value="Chaperonin_GroES"/>
</dbReference>
<dbReference type="InterPro" id="IPR037124">
    <property type="entry name" value="Chaperonin_GroES_sf"/>
</dbReference>
<dbReference type="InterPro" id="IPR011032">
    <property type="entry name" value="GroES-like_sf"/>
</dbReference>
<dbReference type="NCBIfam" id="NF001526">
    <property type="entry name" value="PRK00364.1-1"/>
    <property type="match status" value="1"/>
</dbReference>
<dbReference type="PANTHER" id="PTHR10772">
    <property type="entry name" value="10 KDA HEAT SHOCK PROTEIN"/>
    <property type="match status" value="1"/>
</dbReference>
<dbReference type="PANTHER" id="PTHR10772:SF58">
    <property type="entry name" value="CO-CHAPERONIN GROES"/>
    <property type="match status" value="1"/>
</dbReference>
<dbReference type="Pfam" id="PF00166">
    <property type="entry name" value="Cpn10"/>
    <property type="match status" value="1"/>
</dbReference>
<dbReference type="PRINTS" id="PR00297">
    <property type="entry name" value="CHAPERONIN10"/>
</dbReference>
<dbReference type="SMART" id="SM00883">
    <property type="entry name" value="Cpn10"/>
    <property type="match status" value="1"/>
</dbReference>
<dbReference type="SUPFAM" id="SSF50129">
    <property type="entry name" value="GroES-like"/>
    <property type="match status" value="1"/>
</dbReference>
<sequence>MNIRLLHDRVIVKRKEMESKSAGGIVLTGSAAGKSTRGEVIAVGKGRVLENGNIQPLDVKIGDTIIFNDGYSVKVEKIDNQDVLIMSESDILAIVEE</sequence>
<organism>
    <name type="scientific">Buchnera aphidicola subsp. Thelaxes suberi</name>
    <dbReference type="NCBI Taxonomy" id="98797"/>
    <lineage>
        <taxon>Bacteria</taxon>
        <taxon>Pseudomonadati</taxon>
        <taxon>Pseudomonadota</taxon>
        <taxon>Gammaproteobacteria</taxon>
        <taxon>Enterobacterales</taxon>
        <taxon>Erwiniaceae</taxon>
        <taxon>Buchnera</taxon>
    </lineage>
</organism>
<name>CH10_BUCTS</name>
<feature type="chain" id="PRO_0000174720" description="Co-chaperonin GroES">
    <location>
        <begin position="1"/>
        <end position="97"/>
    </location>
</feature>